<comment type="function">
    <text evidence="5">Periplasmic acid trehalase that catalyzes hydrolysis of the disaccharide trehalose and required for growth on trehalose as carbon source (PubMed:15128531). Growth on trehalose is strictly respiratory (PubMed:15128531).</text>
</comment>
<comment type="catalytic activity">
    <reaction evidence="8">
        <text>alpha,alpha-trehalose + H2O = alpha-D-glucose + beta-D-glucose</text>
        <dbReference type="Rhea" id="RHEA:32675"/>
        <dbReference type="ChEBI" id="CHEBI:15377"/>
        <dbReference type="ChEBI" id="CHEBI:15903"/>
        <dbReference type="ChEBI" id="CHEBI:16551"/>
        <dbReference type="ChEBI" id="CHEBI:17925"/>
        <dbReference type="EC" id="3.2.1.28"/>
    </reaction>
</comment>
<comment type="subcellular location">
    <subcellularLocation>
        <location evidence="2">Membrane</location>
        <topology evidence="2">Single-pass type II membrane protein</topology>
    </subcellularLocation>
    <subcellularLocation>
        <location evidence="2">Vacuole lumen</location>
    </subcellularLocation>
    <subcellularLocation>
        <location evidence="5">Periplasm</location>
    </subcellularLocation>
    <text evidence="2 5">May localize to the periplasm either as a membrane-bound or as a free protein (PubMed:15128531). Vacuolar localization appears to be associated with its degradation (By similarity).</text>
</comment>
<comment type="PTM">
    <text evidence="2">Glycosylated.</text>
</comment>
<comment type="disruption phenotype">
    <text evidence="5">Severely decreases growth on trehalose carbon source, simultaneous disruption of AGT1 or NTH1 abolishes growth.</text>
</comment>
<comment type="similarity">
    <text evidence="7">Belongs to the glycosyl hydrolase 65 family.</text>
</comment>
<protein>
    <recommendedName>
        <fullName evidence="6">Periplasmic acid trehalase ATC1</fullName>
        <ecNumber evidence="8">3.2.1.28</ecNumber>
    </recommendedName>
</protein>
<gene>
    <name evidence="9" type="ORF">CENPK1137D_1727</name>
</gene>
<organism evidence="10">
    <name type="scientific">Saccharomyces cerevisiae (strain CEN.PK113-7D)</name>
    <name type="common">Baker's yeast</name>
    <dbReference type="NCBI Taxonomy" id="889517"/>
    <lineage>
        <taxon>Eukaryota</taxon>
        <taxon>Fungi</taxon>
        <taxon>Dikarya</taxon>
        <taxon>Ascomycota</taxon>
        <taxon>Saccharomycotina</taxon>
        <taxon>Saccharomycetes</taxon>
        <taxon>Saccharomycetales</taxon>
        <taxon>Saccharomycetaceae</taxon>
        <taxon>Saccharomyces</taxon>
    </lineage>
</organism>
<name>ATH1_YEASC</name>
<keyword id="KW-0325">Glycoprotein</keyword>
<keyword id="KW-0378">Hydrolase</keyword>
<keyword id="KW-0472">Membrane</keyword>
<keyword id="KW-0574">Periplasm</keyword>
<keyword id="KW-0735">Signal-anchor</keyword>
<keyword id="KW-0812">Transmembrane</keyword>
<keyword id="KW-1133">Transmembrane helix</keyword>
<keyword id="KW-0926">Vacuole</keyword>
<proteinExistence type="evidence at protein level"/>
<feature type="chain" id="PRO_0000452330" description="Periplasmic acid trehalase ATC1">
    <location>
        <begin position="1"/>
        <end position="1211"/>
    </location>
</feature>
<feature type="topological domain" description="Cytoplasmic" evidence="7">
    <location>
        <begin position="1"/>
        <end position="46"/>
    </location>
</feature>
<feature type="transmembrane region" description="Helical" evidence="3">
    <location>
        <begin position="47"/>
        <end position="67"/>
    </location>
</feature>
<feature type="topological domain" description="Periplasmic" evidence="7">
    <location>
        <begin position="68"/>
        <end position="1211"/>
    </location>
</feature>
<feature type="region of interest" description="Required for cell surface targeting" evidence="2">
    <location>
        <begin position="70"/>
        <end position="131"/>
    </location>
</feature>
<feature type="active site" description="Proton donor" evidence="1">
    <location>
        <position position="644"/>
    </location>
</feature>
<feature type="binding site" evidence="1">
    <location>
        <begin position="513"/>
        <end position="514"/>
    </location>
    <ligand>
        <name>substrate</name>
    </ligand>
</feature>
<feature type="binding site" evidence="1">
    <location>
        <begin position="711"/>
        <end position="712"/>
    </location>
    <ligand>
        <name>substrate</name>
    </ligand>
</feature>
<feature type="glycosylation site" description="N-linked (GlcNAc...) asparagine" evidence="4">
    <location>
        <position position="98"/>
    </location>
</feature>
<feature type="glycosylation site" description="N-linked (GlcNAc...) asparagine" evidence="4">
    <location>
        <position position="207"/>
    </location>
</feature>
<feature type="glycosylation site" description="N-linked (GlcNAc...) asparagine" evidence="4">
    <location>
        <position position="238"/>
    </location>
</feature>
<feature type="glycosylation site" description="N-linked (GlcNAc...) asparagine" evidence="4">
    <location>
        <position position="247"/>
    </location>
</feature>
<feature type="glycosylation site" description="N-linked (GlcNAc...) asparagine" evidence="4">
    <location>
        <position position="255"/>
    </location>
</feature>
<feature type="glycosylation site" description="N-linked (GlcNAc...) asparagine" evidence="4">
    <location>
        <position position="259"/>
    </location>
</feature>
<feature type="glycosylation site" description="N-linked (GlcNAc...) asparagine" evidence="4">
    <location>
        <position position="325"/>
    </location>
</feature>
<feature type="glycosylation site" description="N-linked (GlcNAc...) asparagine" evidence="4">
    <location>
        <position position="370"/>
    </location>
</feature>
<feature type="glycosylation site" description="N-linked (GlcNAc...) asparagine" evidence="4">
    <location>
        <position position="376"/>
    </location>
</feature>
<feature type="glycosylation site" description="N-linked (GlcNAc...) asparagine" evidence="4">
    <location>
        <position position="488"/>
    </location>
</feature>
<feature type="glycosylation site" description="N-linked (GlcNAc...) asparagine" evidence="4">
    <location>
        <position position="539"/>
    </location>
</feature>
<feature type="glycosylation site" description="N-linked (GlcNAc...) asparagine" evidence="4">
    <location>
        <position position="568"/>
    </location>
</feature>
<feature type="glycosylation site" description="N-linked (GlcNAc...) asparagine" evidence="4">
    <location>
        <position position="628"/>
    </location>
</feature>
<feature type="glycosylation site" description="N-linked (GlcNAc...) asparagine" evidence="4">
    <location>
        <position position="638"/>
    </location>
</feature>
<feature type="glycosylation site" description="N-linked (GlcNAc...) asparagine" evidence="4">
    <location>
        <position position="696"/>
    </location>
</feature>
<feature type="glycosylation site" description="N-linked (GlcNAc...) asparagine" evidence="4">
    <location>
        <position position="705"/>
    </location>
</feature>
<feature type="glycosylation site" description="N-linked (GlcNAc...) asparagine" evidence="4">
    <location>
        <position position="879"/>
    </location>
</feature>
<feature type="glycosylation site" description="N-linked (GlcNAc...) asparagine" evidence="4">
    <location>
        <position position="897"/>
    </location>
</feature>
<feature type="glycosylation site" description="N-linked (GlcNAc...) asparagine" evidence="4">
    <location>
        <position position="910"/>
    </location>
</feature>
<feature type="glycosylation site" description="N-linked (GlcNAc...) asparagine" evidence="4">
    <location>
        <position position="972"/>
    </location>
</feature>
<feature type="glycosylation site" description="N-linked (GlcNAc...) asparagine" evidence="4">
    <location>
        <position position="990"/>
    </location>
</feature>
<feature type="glycosylation site" description="N-linked (GlcNAc...) asparagine" evidence="4">
    <location>
        <position position="1031"/>
    </location>
</feature>
<feature type="glycosylation site" description="N-linked (GlcNAc...) asparagine" evidence="4">
    <location>
        <position position="1049"/>
    </location>
</feature>
<feature type="glycosylation site" description="N-linked (GlcNAc...) asparagine" evidence="4">
    <location>
        <position position="1064"/>
    </location>
</feature>
<feature type="glycosylation site" description="N-linked (GlcNAc...) asparagine" evidence="4">
    <location>
        <position position="1147"/>
    </location>
</feature>
<feature type="glycosylation site" description="N-linked (GlcNAc...) asparagine" evidence="4">
    <location>
        <position position="1157"/>
    </location>
</feature>
<accession>N1P212</accession>
<dbReference type="EC" id="3.2.1.28" evidence="8"/>
<dbReference type="EMBL" id="CM001537">
    <property type="protein sequence ID" value="EIW07140.1"/>
    <property type="molecule type" value="Genomic_DNA"/>
</dbReference>
<dbReference type="SMR" id="N1P212"/>
<dbReference type="HOGENOM" id="CLU_006285_4_0_1"/>
<dbReference type="OrthoDB" id="23721at4893"/>
<dbReference type="Proteomes" id="UP000013192">
    <property type="component" value="Chromosome XVI"/>
</dbReference>
<dbReference type="GO" id="GO:0030287">
    <property type="term" value="C:cell wall-bounded periplasmic space"/>
    <property type="evidence" value="ECO:0000314"/>
    <property type="project" value="UniProtKB"/>
</dbReference>
<dbReference type="GO" id="GO:0009277">
    <property type="term" value="C:fungal-type cell wall"/>
    <property type="evidence" value="ECO:0007669"/>
    <property type="project" value="TreeGrafter"/>
</dbReference>
<dbReference type="GO" id="GO:0016020">
    <property type="term" value="C:membrane"/>
    <property type="evidence" value="ECO:0007669"/>
    <property type="project" value="UniProtKB-SubCell"/>
</dbReference>
<dbReference type="GO" id="GO:0005775">
    <property type="term" value="C:vacuolar lumen"/>
    <property type="evidence" value="ECO:0007669"/>
    <property type="project" value="UniProtKB-SubCell"/>
</dbReference>
<dbReference type="GO" id="GO:0004555">
    <property type="term" value="F:alpha,alpha-trehalase activity"/>
    <property type="evidence" value="ECO:0000315"/>
    <property type="project" value="UniProtKB"/>
</dbReference>
<dbReference type="GO" id="GO:0030246">
    <property type="term" value="F:carbohydrate binding"/>
    <property type="evidence" value="ECO:0007669"/>
    <property type="project" value="InterPro"/>
</dbReference>
<dbReference type="GO" id="GO:0015976">
    <property type="term" value="P:carbon utilization"/>
    <property type="evidence" value="ECO:0000315"/>
    <property type="project" value="UniProtKB"/>
</dbReference>
<dbReference type="GO" id="GO:0005993">
    <property type="term" value="P:trehalose catabolic process"/>
    <property type="evidence" value="ECO:0007669"/>
    <property type="project" value="TreeGrafter"/>
</dbReference>
<dbReference type="FunFam" id="2.70.98.40:FF:000003">
    <property type="entry name" value="Acid trehalase"/>
    <property type="match status" value="1"/>
</dbReference>
<dbReference type="FunFam" id="1.50.10.10:FF:000032">
    <property type="entry name" value="Vacuolar acid trehalase"/>
    <property type="match status" value="1"/>
</dbReference>
<dbReference type="Gene3D" id="1.50.10.10">
    <property type="match status" value="1"/>
</dbReference>
<dbReference type="Gene3D" id="2.70.98.40">
    <property type="entry name" value="Glycoside hydrolase, family 65, N-terminal domain"/>
    <property type="match status" value="1"/>
</dbReference>
<dbReference type="InterPro" id="IPR008928">
    <property type="entry name" value="6-hairpin_glycosidase_sf"/>
</dbReference>
<dbReference type="InterPro" id="IPR012341">
    <property type="entry name" value="6hp_glycosidase-like_sf"/>
</dbReference>
<dbReference type="InterPro" id="IPR011013">
    <property type="entry name" value="Gal_mutarotase_sf_dom"/>
</dbReference>
<dbReference type="InterPro" id="IPR005194">
    <property type="entry name" value="Glyco_hydro_65_C"/>
</dbReference>
<dbReference type="InterPro" id="IPR005195">
    <property type="entry name" value="Glyco_hydro_65_M"/>
</dbReference>
<dbReference type="InterPro" id="IPR005196">
    <property type="entry name" value="Glyco_hydro_65_N"/>
</dbReference>
<dbReference type="InterPro" id="IPR037018">
    <property type="entry name" value="Glyco_hydro_65_N_sf"/>
</dbReference>
<dbReference type="PANTHER" id="PTHR11051">
    <property type="entry name" value="GLYCOSYL HYDROLASE-RELATED"/>
    <property type="match status" value="1"/>
</dbReference>
<dbReference type="PANTHER" id="PTHR11051:SF8">
    <property type="entry name" value="PROTEIN-GLUCOSYLGALACTOSYLHYDROXYLYSINE GLUCOSIDASE"/>
    <property type="match status" value="1"/>
</dbReference>
<dbReference type="Pfam" id="PF03633">
    <property type="entry name" value="Glyco_hydro_65C"/>
    <property type="match status" value="1"/>
</dbReference>
<dbReference type="Pfam" id="PF03632">
    <property type="entry name" value="Glyco_hydro_65m"/>
    <property type="match status" value="1"/>
</dbReference>
<dbReference type="Pfam" id="PF03636">
    <property type="entry name" value="Glyco_hydro_65N"/>
    <property type="match status" value="1"/>
</dbReference>
<dbReference type="SUPFAM" id="SSF74650">
    <property type="entry name" value="Galactose mutarotase-like"/>
    <property type="match status" value="1"/>
</dbReference>
<dbReference type="SUPFAM" id="SSF48208">
    <property type="entry name" value="Six-hairpin glycosidases"/>
    <property type="match status" value="1"/>
</dbReference>
<evidence type="ECO:0000250" key="1">
    <source>
        <dbReference type="UniProtKB" id="D6XZ22"/>
    </source>
</evidence>
<evidence type="ECO:0000250" key="2">
    <source>
        <dbReference type="UniProtKB" id="P48016"/>
    </source>
</evidence>
<evidence type="ECO:0000255" key="3"/>
<evidence type="ECO:0000255" key="4">
    <source>
        <dbReference type="PROSITE-ProRule" id="PRU00498"/>
    </source>
</evidence>
<evidence type="ECO:0000269" key="5">
    <source>
    </source>
</evidence>
<evidence type="ECO:0000303" key="6">
    <source>
    </source>
</evidence>
<evidence type="ECO:0000305" key="7"/>
<evidence type="ECO:0000305" key="8">
    <source>
    </source>
</evidence>
<evidence type="ECO:0000312" key="9">
    <source>
        <dbReference type="EMBL" id="EIW07140.1"/>
    </source>
</evidence>
<evidence type="ECO:0000312" key="10">
    <source>
        <dbReference type="Proteomes" id="UP000013192"/>
    </source>
</evidence>
<reference evidence="10" key="1">
    <citation type="journal article" date="2012" name="Microb. Cell Fact.">
        <title>De novo sequencing, assembly and analysis of the genome of the laboratory strain Saccharomyces cerevisiae CEN.PK113-7D, a model for modern industrial biotechnology.</title>
        <authorList>
            <person name="Nijkamp J.F."/>
            <person name="van den Broek M."/>
            <person name="Datema E."/>
            <person name="de Kok S."/>
            <person name="Bosman L."/>
            <person name="Luttik M.A."/>
            <person name="Daran-Lapujade P."/>
            <person name="Vongsangnak W."/>
            <person name="Nielsen J."/>
            <person name="Heijne W.H.M."/>
            <person name="Klaassen P."/>
            <person name="Paddon C.J."/>
            <person name="Platt D."/>
            <person name="Koetter P."/>
            <person name="van Ham R.C."/>
            <person name="Reinders M.J.T."/>
            <person name="Pronk J.T."/>
            <person name="de Ridder D."/>
            <person name="Daran J.-M."/>
        </authorList>
    </citation>
    <scope>NUCLEOTIDE SEQUENCE [LARGE SCALE GENOMIC DNA]</scope>
    <source>
        <strain evidence="10">CEN.PK113-7D</strain>
    </source>
</reference>
<reference key="2">
    <citation type="journal article" date="2004" name="Appl. Environ. Microbiol.">
        <title>Two distinct pathways for trehalose assimilation in the yeast Saccharomyces cerevisiae.</title>
        <authorList>
            <person name="Jules M."/>
            <person name="Guillou V."/>
            <person name="Francois J."/>
            <person name="Parrou J.L."/>
        </authorList>
    </citation>
    <scope>FUNCTION</scope>
    <scope>CATALYTIC ACTIVITY</scope>
    <scope>SUBCELLULAR LOCATION</scope>
    <scope>DISRUPTION PHENOTYPE</scope>
</reference>
<sequence>MKRIRSLWFNAEASYSNLNNSPSLRNKNSTGNNSRSKNYRSFSRFDLINSILLLMMLFLLAIFVTALYLTKSSRLTYSHASRAALFNPLGVISPSLGNHTLNYDPEARESSKKLYELLSDFNTAYYDDENMILGSNLFSKNTYSRQPYVANGYIGSRIPNIGFGYALDTLNFYTDAPGALNNGWPLRNHRFAGAFVSDFYCLQPKLNSTNFPELDDVGYSTVISSIPQWTNLQFSLVNDSKWFNPQNVTLDDVTNYSQNLSMKDGIVTTELDWLNSQIHVKSEIWAHRHIHPLGVVSLEISLNTDHLPSDFDSLDVNIWDILDFNTSHRTVLHSTGTDEKNNAVFMIVQPDNVPSSNCAIYSTCTVKYENSTNPINSSESFEEKDVSSNIYNVILTEDQPKIIVHKYVGIMSTEFNKNKEQQDNTNIGLAKMIALNSKGNYEKLLSSHKRAWYDLYNDAFIEIPSDSLLEMTARSSLFHLLANTRDYNVSSDRGLPVGVSGLSSDSYGGMVFWDADIWMEPALLPFFPNVAQNMNNYRNATHSQAKLNAEKYGYPGAIYPWTSGKYANCTSTGPCVDYEYHINVDVAMASFSIYLNGHEGIDDEYLRYTTWPIIKNAAQFFTAYVKYNSSLGLYETYNLTDPDEFANHINNGAFTNAGIKTLLKWATDIGNHLGEVVDPKWSEISKDIYIPRSSSNITLEYSGMNSSVEIKQADVTLMVYPLGYINDESILNNAIKDLYYYSERQSASGPAMTYPVFVAAAAGLLNHGSSSQSYLYKSVLPYLRAPFAQFSEQSDDNFLTNGLTQPAFPFLTANGGFLQSILFGLTGIRYSYEVDPDTKKINRLLRFNPIELPLLPGGIAIRNFKYMNQVLDIIIDDHNGTIVHKSGDVPIHIKIPNRSLIHDQDINFYNGSENERKPNLERRDVDRVGDPMRMDRYGTYYLLKPKQELTVQLFKPGLNARNNIAENKQITNLTAGVPGDVAFSALDGNNYTHWQPLDKIHRAKLLIDLGEYNEKEITKGMILWGQRPAKNISISILPHSEKVENLFANVTEIMQNSGNDQLLNETIGQLLDNAGIPVENVIDFDGIEQEDDESLDDVQALLHWKKEDLAKLIEQIPRLNFLKRKFVKILDNVPVSPSEPYYEASRNQSLIEILPSNRTTFTIDYDKLQVGDKGNTDWRKTRYIVVAVQGVYDDYDDDNKGATIKEIVLND</sequence>